<proteinExistence type="inferred from homology"/>
<comment type="function">
    <text evidence="1">Catalyzes the transfer of the phosphoribosyl group of 5-phosphorylribose-1-pyrophosphate (PRPP) to anthranilate to yield N-(5'-phosphoribosyl)-anthranilate (PRA).</text>
</comment>
<comment type="catalytic activity">
    <reaction evidence="1">
        <text>N-(5-phospho-beta-D-ribosyl)anthranilate + diphosphate = 5-phospho-alpha-D-ribose 1-diphosphate + anthranilate</text>
        <dbReference type="Rhea" id="RHEA:11768"/>
        <dbReference type="ChEBI" id="CHEBI:16567"/>
        <dbReference type="ChEBI" id="CHEBI:18277"/>
        <dbReference type="ChEBI" id="CHEBI:33019"/>
        <dbReference type="ChEBI" id="CHEBI:58017"/>
        <dbReference type="EC" id="2.4.2.18"/>
    </reaction>
</comment>
<comment type="cofactor">
    <cofactor evidence="1">
        <name>Mg(2+)</name>
        <dbReference type="ChEBI" id="CHEBI:18420"/>
    </cofactor>
    <text evidence="1">Binds 2 magnesium ions per monomer.</text>
</comment>
<comment type="pathway">
    <text evidence="1">Amino-acid biosynthesis; L-tryptophan biosynthesis; L-tryptophan from chorismate: step 2/5.</text>
</comment>
<comment type="subunit">
    <text evidence="1">Homodimer.</text>
</comment>
<comment type="similarity">
    <text evidence="1">Belongs to the anthranilate phosphoribosyltransferase family.</text>
</comment>
<keyword id="KW-0028">Amino-acid biosynthesis</keyword>
<keyword id="KW-0057">Aromatic amino acid biosynthesis</keyword>
<keyword id="KW-0328">Glycosyltransferase</keyword>
<keyword id="KW-0460">Magnesium</keyword>
<keyword id="KW-0479">Metal-binding</keyword>
<keyword id="KW-1185">Reference proteome</keyword>
<keyword id="KW-0808">Transferase</keyword>
<keyword id="KW-0822">Tryptophan biosynthesis</keyword>
<feature type="chain" id="PRO_1000071745" description="Anthranilate phosphoribosyltransferase">
    <location>
        <begin position="1"/>
        <end position="341"/>
    </location>
</feature>
<feature type="binding site" evidence="1">
    <location>
        <position position="81"/>
    </location>
    <ligand>
        <name>5-phospho-alpha-D-ribose 1-diphosphate</name>
        <dbReference type="ChEBI" id="CHEBI:58017"/>
    </ligand>
</feature>
<feature type="binding site" evidence="1">
    <location>
        <position position="81"/>
    </location>
    <ligand>
        <name>anthranilate</name>
        <dbReference type="ChEBI" id="CHEBI:16567"/>
        <label>1</label>
    </ligand>
</feature>
<feature type="binding site" evidence="1">
    <location>
        <begin position="84"/>
        <end position="85"/>
    </location>
    <ligand>
        <name>5-phospho-alpha-D-ribose 1-diphosphate</name>
        <dbReference type="ChEBI" id="CHEBI:58017"/>
    </ligand>
</feature>
<feature type="binding site" evidence="1">
    <location>
        <position position="89"/>
    </location>
    <ligand>
        <name>5-phospho-alpha-D-ribose 1-diphosphate</name>
        <dbReference type="ChEBI" id="CHEBI:58017"/>
    </ligand>
</feature>
<feature type="binding site" evidence="1">
    <location>
        <begin position="91"/>
        <end position="94"/>
    </location>
    <ligand>
        <name>5-phospho-alpha-D-ribose 1-diphosphate</name>
        <dbReference type="ChEBI" id="CHEBI:58017"/>
    </ligand>
</feature>
<feature type="binding site" evidence="1">
    <location>
        <position position="93"/>
    </location>
    <ligand>
        <name>Mg(2+)</name>
        <dbReference type="ChEBI" id="CHEBI:18420"/>
        <label>1</label>
    </ligand>
</feature>
<feature type="binding site" evidence="1">
    <location>
        <begin position="109"/>
        <end position="117"/>
    </location>
    <ligand>
        <name>5-phospho-alpha-D-ribose 1-diphosphate</name>
        <dbReference type="ChEBI" id="CHEBI:58017"/>
    </ligand>
</feature>
<feature type="binding site" evidence="1">
    <location>
        <position position="112"/>
    </location>
    <ligand>
        <name>anthranilate</name>
        <dbReference type="ChEBI" id="CHEBI:16567"/>
        <label>1</label>
    </ligand>
</feature>
<feature type="binding site" evidence="1">
    <location>
        <position position="121"/>
    </location>
    <ligand>
        <name>5-phospho-alpha-D-ribose 1-diphosphate</name>
        <dbReference type="ChEBI" id="CHEBI:58017"/>
    </ligand>
</feature>
<feature type="binding site" evidence="1">
    <location>
        <position position="167"/>
    </location>
    <ligand>
        <name>anthranilate</name>
        <dbReference type="ChEBI" id="CHEBI:16567"/>
        <label>2</label>
    </ligand>
</feature>
<feature type="binding site" evidence="1">
    <location>
        <position position="226"/>
    </location>
    <ligand>
        <name>Mg(2+)</name>
        <dbReference type="ChEBI" id="CHEBI:18420"/>
        <label>2</label>
    </ligand>
</feature>
<feature type="binding site" evidence="1">
    <location>
        <position position="227"/>
    </location>
    <ligand>
        <name>Mg(2+)</name>
        <dbReference type="ChEBI" id="CHEBI:18420"/>
        <label>1</label>
    </ligand>
</feature>
<feature type="binding site" evidence="1">
    <location>
        <position position="227"/>
    </location>
    <ligand>
        <name>Mg(2+)</name>
        <dbReference type="ChEBI" id="CHEBI:18420"/>
        <label>2</label>
    </ligand>
</feature>
<gene>
    <name evidence="1" type="primary">trpD</name>
    <name type="ordered locus">Plav_3172</name>
</gene>
<accession>A7HXZ5</accession>
<organism>
    <name type="scientific">Parvibaculum lavamentivorans (strain DS-1 / DSM 13023 / NCIMB 13966)</name>
    <dbReference type="NCBI Taxonomy" id="402881"/>
    <lineage>
        <taxon>Bacteria</taxon>
        <taxon>Pseudomonadati</taxon>
        <taxon>Pseudomonadota</taxon>
        <taxon>Alphaproteobacteria</taxon>
        <taxon>Hyphomicrobiales</taxon>
        <taxon>Parvibaculaceae</taxon>
        <taxon>Parvibaculum</taxon>
    </lineage>
</organism>
<sequence>MTDFKTIIARLAEGRALDAAEARAAFEIVMSGEATQAQIGAFLMGLRVRGETVAEITAGATVMRERALRVTAPANAIDIVGTGGDGVGTWNISTATALVVAAAGVPVAKHGNRKASSLSGTADALQALGVNLDIDPATIAASIEKAGIGFMFAQAHHAAMKHVAPVRADLGIKTIFNMLGPLSNPALVKRQLLGVFAAEWVKPFAEALRNLGSDSAWVVHGSDGMDELTTTGPSAVAELKGGSIRVFEVTPEDAGLPRASIEDLKGGDPEQNAAAIRRLLDGEAGAYRDIVLLNTAAALIVSGKAATLKEGAGLAAKAIDSGAAKQTLAKLVAATNGKNNV</sequence>
<protein>
    <recommendedName>
        <fullName evidence="1">Anthranilate phosphoribosyltransferase</fullName>
        <ecNumber evidence="1">2.4.2.18</ecNumber>
    </recommendedName>
</protein>
<evidence type="ECO:0000255" key="1">
    <source>
        <dbReference type="HAMAP-Rule" id="MF_00211"/>
    </source>
</evidence>
<name>TRPD_PARL1</name>
<reference key="1">
    <citation type="journal article" date="2011" name="Stand. Genomic Sci.">
        <title>Complete genome sequence of Parvibaculum lavamentivorans type strain (DS-1(T)).</title>
        <authorList>
            <person name="Schleheck D."/>
            <person name="Weiss M."/>
            <person name="Pitluck S."/>
            <person name="Bruce D."/>
            <person name="Land M.L."/>
            <person name="Han S."/>
            <person name="Saunders E."/>
            <person name="Tapia R."/>
            <person name="Detter C."/>
            <person name="Brettin T."/>
            <person name="Han J."/>
            <person name="Woyke T."/>
            <person name="Goodwin L."/>
            <person name="Pennacchio L."/>
            <person name="Nolan M."/>
            <person name="Cook A.M."/>
            <person name="Kjelleberg S."/>
            <person name="Thomas T."/>
        </authorList>
    </citation>
    <scope>NUCLEOTIDE SEQUENCE [LARGE SCALE GENOMIC DNA]</scope>
    <source>
        <strain>DS-1 / DSM 13023 / NCIMB 13966</strain>
    </source>
</reference>
<dbReference type="EC" id="2.4.2.18" evidence="1"/>
<dbReference type="EMBL" id="CP000774">
    <property type="protein sequence ID" value="ABS64778.1"/>
    <property type="molecule type" value="Genomic_DNA"/>
</dbReference>
<dbReference type="RefSeq" id="WP_012112104.1">
    <property type="nucleotide sequence ID" value="NC_009719.1"/>
</dbReference>
<dbReference type="SMR" id="A7HXZ5"/>
<dbReference type="STRING" id="402881.Plav_3172"/>
<dbReference type="KEGG" id="pla:Plav_3172"/>
<dbReference type="eggNOG" id="COG0547">
    <property type="taxonomic scope" value="Bacteria"/>
</dbReference>
<dbReference type="HOGENOM" id="CLU_034315_2_1_5"/>
<dbReference type="OrthoDB" id="9806430at2"/>
<dbReference type="UniPathway" id="UPA00035">
    <property type="reaction ID" value="UER00041"/>
</dbReference>
<dbReference type="Proteomes" id="UP000006377">
    <property type="component" value="Chromosome"/>
</dbReference>
<dbReference type="GO" id="GO:0005829">
    <property type="term" value="C:cytosol"/>
    <property type="evidence" value="ECO:0007669"/>
    <property type="project" value="TreeGrafter"/>
</dbReference>
<dbReference type="GO" id="GO:0004048">
    <property type="term" value="F:anthranilate phosphoribosyltransferase activity"/>
    <property type="evidence" value="ECO:0007669"/>
    <property type="project" value="UniProtKB-UniRule"/>
</dbReference>
<dbReference type="GO" id="GO:0000287">
    <property type="term" value="F:magnesium ion binding"/>
    <property type="evidence" value="ECO:0007669"/>
    <property type="project" value="UniProtKB-UniRule"/>
</dbReference>
<dbReference type="GO" id="GO:0000162">
    <property type="term" value="P:L-tryptophan biosynthetic process"/>
    <property type="evidence" value="ECO:0007669"/>
    <property type="project" value="UniProtKB-UniRule"/>
</dbReference>
<dbReference type="FunFam" id="3.40.1030.10:FF:000002">
    <property type="entry name" value="Anthranilate phosphoribosyltransferase"/>
    <property type="match status" value="1"/>
</dbReference>
<dbReference type="Gene3D" id="3.40.1030.10">
    <property type="entry name" value="Nucleoside phosphorylase/phosphoribosyltransferase catalytic domain"/>
    <property type="match status" value="1"/>
</dbReference>
<dbReference type="Gene3D" id="1.20.970.10">
    <property type="entry name" value="Transferase, Pyrimidine Nucleoside Phosphorylase, Chain C"/>
    <property type="match status" value="1"/>
</dbReference>
<dbReference type="HAMAP" id="MF_00211">
    <property type="entry name" value="TrpD"/>
    <property type="match status" value="1"/>
</dbReference>
<dbReference type="InterPro" id="IPR005940">
    <property type="entry name" value="Anthranilate_Pribosyl_Tfrase"/>
</dbReference>
<dbReference type="InterPro" id="IPR000312">
    <property type="entry name" value="Glycosyl_Trfase_fam3"/>
</dbReference>
<dbReference type="InterPro" id="IPR017459">
    <property type="entry name" value="Glycosyl_Trfase_fam3_N_dom"/>
</dbReference>
<dbReference type="InterPro" id="IPR036320">
    <property type="entry name" value="Glycosyl_Trfase_fam3_N_dom_sf"/>
</dbReference>
<dbReference type="InterPro" id="IPR035902">
    <property type="entry name" value="Nuc_phospho_transferase"/>
</dbReference>
<dbReference type="NCBIfam" id="TIGR01245">
    <property type="entry name" value="trpD"/>
    <property type="match status" value="1"/>
</dbReference>
<dbReference type="PANTHER" id="PTHR43285">
    <property type="entry name" value="ANTHRANILATE PHOSPHORIBOSYLTRANSFERASE"/>
    <property type="match status" value="1"/>
</dbReference>
<dbReference type="PANTHER" id="PTHR43285:SF2">
    <property type="entry name" value="ANTHRANILATE PHOSPHORIBOSYLTRANSFERASE"/>
    <property type="match status" value="1"/>
</dbReference>
<dbReference type="Pfam" id="PF02885">
    <property type="entry name" value="Glycos_trans_3N"/>
    <property type="match status" value="1"/>
</dbReference>
<dbReference type="Pfam" id="PF00591">
    <property type="entry name" value="Glycos_transf_3"/>
    <property type="match status" value="1"/>
</dbReference>
<dbReference type="SUPFAM" id="SSF52418">
    <property type="entry name" value="Nucleoside phosphorylase/phosphoribosyltransferase catalytic domain"/>
    <property type="match status" value="1"/>
</dbReference>
<dbReference type="SUPFAM" id="SSF47648">
    <property type="entry name" value="Nucleoside phosphorylase/phosphoribosyltransferase N-terminal domain"/>
    <property type="match status" value="1"/>
</dbReference>